<evidence type="ECO:0000255" key="1">
    <source>
        <dbReference type="HAMAP-Rule" id="MF_00048"/>
    </source>
</evidence>
<comment type="similarity">
    <text evidence="1">Belongs to the UPF0102 family.</text>
</comment>
<organism>
    <name type="scientific">Acidothermus cellulolyticus (strain ATCC 43068 / DSM 8971 / 11B)</name>
    <dbReference type="NCBI Taxonomy" id="351607"/>
    <lineage>
        <taxon>Bacteria</taxon>
        <taxon>Bacillati</taxon>
        <taxon>Actinomycetota</taxon>
        <taxon>Actinomycetes</taxon>
        <taxon>Acidothermales</taxon>
        <taxon>Acidothermaceae</taxon>
        <taxon>Acidothermus</taxon>
    </lineage>
</organism>
<keyword id="KW-1185">Reference proteome</keyword>
<sequence>MAGTASAREALGRFGEELAAQHLQTLGMTILARNWRCRSGELDIVARDGYTLVVCEVKTRRGVGFGEPLESVTPRKAARLRQLAVAWLTEHAATRVDTTEGTHGYTAVRFDVVAILHRKEDGPTIEYVRGAF</sequence>
<reference key="1">
    <citation type="journal article" date="2009" name="Genome Res.">
        <title>Complete genome of the cellulolytic thermophile Acidothermus cellulolyticus 11B provides insights into its ecophysiological and evolutionary adaptations.</title>
        <authorList>
            <person name="Barabote R.D."/>
            <person name="Xie G."/>
            <person name="Leu D.H."/>
            <person name="Normand P."/>
            <person name="Necsulea A."/>
            <person name="Daubin V."/>
            <person name="Medigue C."/>
            <person name="Adney W.S."/>
            <person name="Xu X.C."/>
            <person name="Lapidus A."/>
            <person name="Parales R.E."/>
            <person name="Detter C."/>
            <person name="Pujic P."/>
            <person name="Bruce D."/>
            <person name="Lavire C."/>
            <person name="Challacombe J.F."/>
            <person name="Brettin T.S."/>
            <person name="Berry A.M."/>
        </authorList>
    </citation>
    <scope>NUCLEOTIDE SEQUENCE [LARGE SCALE GENOMIC DNA]</scope>
    <source>
        <strain>ATCC 43068 / DSM 8971 / 11B</strain>
    </source>
</reference>
<dbReference type="EMBL" id="CP000481">
    <property type="protein sequence ID" value="ABK53322.1"/>
    <property type="molecule type" value="Genomic_DNA"/>
</dbReference>
<dbReference type="RefSeq" id="WP_011720385.1">
    <property type="nucleotide sequence ID" value="NC_008578.1"/>
</dbReference>
<dbReference type="SMR" id="A0LV62"/>
<dbReference type="FunCoup" id="A0LV62">
    <property type="interactions" value="17"/>
</dbReference>
<dbReference type="STRING" id="351607.Acel_1550"/>
<dbReference type="KEGG" id="ace:Acel_1550"/>
<dbReference type="eggNOG" id="COG0792">
    <property type="taxonomic scope" value="Bacteria"/>
</dbReference>
<dbReference type="HOGENOM" id="CLU_115353_2_3_11"/>
<dbReference type="InParanoid" id="A0LV62"/>
<dbReference type="OrthoDB" id="9794876at2"/>
<dbReference type="Proteomes" id="UP000008221">
    <property type="component" value="Chromosome"/>
</dbReference>
<dbReference type="GO" id="GO:0003676">
    <property type="term" value="F:nucleic acid binding"/>
    <property type="evidence" value="ECO:0007669"/>
    <property type="project" value="InterPro"/>
</dbReference>
<dbReference type="CDD" id="cd20736">
    <property type="entry name" value="PoNe_Nuclease"/>
    <property type="match status" value="1"/>
</dbReference>
<dbReference type="Gene3D" id="3.40.1350.10">
    <property type="match status" value="1"/>
</dbReference>
<dbReference type="HAMAP" id="MF_00048">
    <property type="entry name" value="UPF0102"/>
    <property type="match status" value="1"/>
</dbReference>
<dbReference type="InterPro" id="IPR011335">
    <property type="entry name" value="Restrct_endonuc-II-like"/>
</dbReference>
<dbReference type="InterPro" id="IPR011856">
    <property type="entry name" value="tRNA_endonuc-like_dom_sf"/>
</dbReference>
<dbReference type="InterPro" id="IPR003509">
    <property type="entry name" value="UPF0102_YraN-like"/>
</dbReference>
<dbReference type="NCBIfam" id="NF009150">
    <property type="entry name" value="PRK12497.1-3"/>
    <property type="match status" value="1"/>
</dbReference>
<dbReference type="NCBIfam" id="NF009154">
    <property type="entry name" value="PRK12497.3-3"/>
    <property type="match status" value="1"/>
</dbReference>
<dbReference type="PANTHER" id="PTHR34039">
    <property type="entry name" value="UPF0102 PROTEIN YRAN"/>
    <property type="match status" value="1"/>
</dbReference>
<dbReference type="PANTHER" id="PTHR34039:SF1">
    <property type="entry name" value="UPF0102 PROTEIN YRAN"/>
    <property type="match status" value="1"/>
</dbReference>
<dbReference type="Pfam" id="PF02021">
    <property type="entry name" value="UPF0102"/>
    <property type="match status" value="1"/>
</dbReference>
<dbReference type="SUPFAM" id="SSF52980">
    <property type="entry name" value="Restriction endonuclease-like"/>
    <property type="match status" value="1"/>
</dbReference>
<feature type="chain" id="PRO_0000336110" description="UPF0102 protein Acel_1550">
    <location>
        <begin position="1"/>
        <end position="132"/>
    </location>
</feature>
<proteinExistence type="inferred from homology"/>
<name>Y1550_ACIC1</name>
<protein>
    <recommendedName>
        <fullName evidence="1">UPF0102 protein Acel_1550</fullName>
    </recommendedName>
</protein>
<accession>A0LV62</accession>
<gene>
    <name type="ordered locus">Acel_1550</name>
</gene>